<comment type="cofactor">
    <cofactor evidence="1">
        <name>[4Fe-4S] cluster</name>
        <dbReference type="ChEBI" id="CHEBI:49883"/>
    </cofactor>
    <text evidence="1">Binds 4 [4Fe-4S] clusters.</text>
</comment>
<accession>Q57619</accession>
<reference key="1">
    <citation type="journal article" date="1996" name="Science">
        <title>Complete genome sequence of the methanogenic archaeon, Methanococcus jannaschii.</title>
        <authorList>
            <person name="Bult C.J."/>
            <person name="White O."/>
            <person name="Olsen G.J."/>
            <person name="Zhou L."/>
            <person name="Fleischmann R.D."/>
            <person name="Sutton G.G."/>
            <person name="Blake J.A."/>
            <person name="FitzGerald L.M."/>
            <person name="Clayton R.A."/>
            <person name="Gocayne J.D."/>
            <person name="Kerlavage A.R."/>
            <person name="Dougherty B.A."/>
            <person name="Tomb J.-F."/>
            <person name="Adams M.D."/>
            <person name="Reich C.I."/>
            <person name="Overbeek R."/>
            <person name="Kirkness E.F."/>
            <person name="Weinstock K.G."/>
            <person name="Merrick J.M."/>
            <person name="Glodek A."/>
            <person name="Scott J.L."/>
            <person name="Geoghagen N.S.M."/>
            <person name="Weidman J.F."/>
            <person name="Fuhrmann J.L."/>
            <person name="Nguyen D."/>
            <person name="Utterback T.R."/>
            <person name="Kelley J.M."/>
            <person name="Peterson J.D."/>
            <person name="Sadow P.W."/>
            <person name="Hanna M.C."/>
            <person name="Cotton M.D."/>
            <person name="Roberts K.M."/>
            <person name="Hurst M.A."/>
            <person name="Kaine B.P."/>
            <person name="Borodovsky M."/>
            <person name="Klenk H.-P."/>
            <person name="Fraser C.M."/>
            <person name="Smith H.O."/>
            <person name="Woese C.R."/>
            <person name="Venter J.C."/>
        </authorList>
    </citation>
    <scope>NUCLEOTIDE SEQUENCE [LARGE SCALE GENOMIC DNA]</scope>
    <source>
        <strain>ATCC 43067 / DSM 2661 / JAL-1 / JCM 10045 / NBRC 100440</strain>
    </source>
</reference>
<feature type="chain" id="PRO_0000159136" description="Uncharacterized ferredoxin MJ0155">
    <location>
        <begin position="1"/>
        <end position="151"/>
    </location>
</feature>
<feature type="domain" description="4Fe-4S ferredoxin-type 1" evidence="2">
    <location>
        <begin position="4"/>
        <end position="32"/>
    </location>
</feature>
<feature type="domain" description="4Fe-4S ferredoxin-type 2" evidence="2">
    <location>
        <begin position="33"/>
        <end position="63"/>
    </location>
</feature>
<feature type="domain" description="4Fe-4S ferredoxin-type 3" evidence="2">
    <location>
        <begin position="64"/>
        <end position="93"/>
    </location>
</feature>
<feature type="binding site" evidence="1">
    <location>
        <position position="13"/>
    </location>
    <ligand>
        <name>[4Fe-4S] cluster</name>
        <dbReference type="ChEBI" id="CHEBI:49883"/>
        <label>1</label>
    </ligand>
</feature>
<feature type="binding site" evidence="1">
    <location>
        <position position="16"/>
    </location>
    <ligand>
        <name>[4Fe-4S] cluster</name>
        <dbReference type="ChEBI" id="CHEBI:49883"/>
        <label>1</label>
    </ligand>
</feature>
<feature type="binding site" evidence="1">
    <location>
        <position position="19"/>
    </location>
    <ligand>
        <name>[4Fe-4S] cluster</name>
        <dbReference type="ChEBI" id="CHEBI:49883"/>
        <label>1</label>
    </ligand>
</feature>
<feature type="binding site" evidence="1">
    <location>
        <position position="23"/>
    </location>
    <ligand>
        <name>[4Fe-4S] cluster</name>
        <dbReference type="ChEBI" id="CHEBI:49883"/>
        <label>2</label>
    </ligand>
</feature>
<feature type="binding site" evidence="1">
    <location>
        <position position="42"/>
    </location>
    <ligand>
        <name>[4Fe-4S] cluster</name>
        <dbReference type="ChEBI" id="CHEBI:49883"/>
        <label>3</label>
    </ligand>
</feature>
<feature type="binding site" evidence="1">
    <location>
        <position position="45"/>
    </location>
    <ligand>
        <name>[4Fe-4S] cluster</name>
        <dbReference type="ChEBI" id="CHEBI:49883"/>
        <label>3</label>
    </ligand>
</feature>
<feature type="binding site" evidence="1">
    <location>
        <position position="50"/>
    </location>
    <ligand>
        <name>[4Fe-4S] cluster</name>
        <dbReference type="ChEBI" id="CHEBI:49883"/>
        <label>3</label>
    </ligand>
</feature>
<feature type="binding site" evidence="1">
    <location>
        <position position="54"/>
    </location>
    <ligand>
        <name>[4Fe-4S] cluster</name>
        <dbReference type="ChEBI" id="CHEBI:49883"/>
        <label>4</label>
    </ligand>
</feature>
<feature type="binding site" evidence="1">
    <location>
        <position position="73"/>
    </location>
    <ligand>
        <name>[4Fe-4S] cluster</name>
        <dbReference type="ChEBI" id="CHEBI:49883"/>
        <label>4</label>
    </ligand>
</feature>
<feature type="binding site" evidence="1">
    <location>
        <position position="76"/>
    </location>
    <ligand>
        <name>[4Fe-4S] cluster</name>
        <dbReference type="ChEBI" id="CHEBI:49883"/>
        <label>4</label>
    </ligand>
</feature>
<feature type="binding site" evidence="1">
    <location>
        <position position="79"/>
    </location>
    <ligand>
        <name>[4Fe-4S] cluster</name>
        <dbReference type="ChEBI" id="CHEBI:49883"/>
        <label>4</label>
    </ligand>
</feature>
<feature type="binding site" evidence="1">
    <location>
        <position position="83"/>
    </location>
    <ligand>
        <name>[4Fe-4S] cluster</name>
        <dbReference type="ChEBI" id="CHEBI:49883"/>
        <label>3</label>
    </ligand>
</feature>
<feature type="binding site" evidence="1">
    <location>
        <position position="98"/>
    </location>
    <ligand>
        <name>[4Fe-4S] cluster</name>
        <dbReference type="ChEBI" id="CHEBI:49883"/>
        <label>2</label>
    </ligand>
</feature>
<feature type="binding site" evidence="1">
    <location>
        <position position="101"/>
    </location>
    <ligand>
        <name>[4Fe-4S] cluster</name>
        <dbReference type="ChEBI" id="CHEBI:49883"/>
        <label>2</label>
    </ligand>
</feature>
<feature type="binding site" evidence="1">
    <location>
        <position position="111"/>
    </location>
    <ligand>
        <name>[4Fe-4S] cluster</name>
        <dbReference type="ChEBI" id="CHEBI:49883"/>
        <label>2</label>
    </ligand>
</feature>
<feature type="binding site" evidence="1">
    <location>
        <position position="115"/>
    </location>
    <ligand>
        <name>[4Fe-4S] cluster</name>
        <dbReference type="ChEBI" id="CHEBI:49883"/>
        <label>1</label>
    </ligand>
</feature>
<proteinExistence type="inferred from homology"/>
<name>FER8_METJA</name>
<keyword id="KW-0004">4Fe-4S</keyword>
<keyword id="KW-0249">Electron transport</keyword>
<keyword id="KW-0408">Iron</keyword>
<keyword id="KW-0411">Iron-sulfur</keyword>
<keyword id="KW-0479">Metal-binding</keyword>
<keyword id="KW-1185">Reference proteome</keyword>
<keyword id="KW-0677">Repeat</keyword>
<keyword id="KW-0813">Transport</keyword>
<evidence type="ECO:0000250" key="1"/>
<evidence type="ECO:0000255" key="2">
    <source>
        <dbReference type="PROSITE-ProRule" id="PRU00711"/>
    </source>
</evidence>
<sequence length="151" mass="16985">MNPKIIVLNPEKCTKCYDCINICKEIHGESRVRKVDGIPIFCMQCENAPCKEICPVDAIYLKDGIPIVDKERCIACGMCAIACPIGAIFIKNRVAHKCTLCLDVDRITPACVEACKDKALLLVSEETLDMMKEEKRKKILKILREEAKENL</sequence>
<protein>
    <recommendedName>
        <fullName>Uncharacterized ferredoxin MJ0155</fullName>
    </recommendedName>
</protein>
<gene>
    <name type="ordered locus">MJ0155</name>
</gene>
<dbReference type="EMBL" id="L77117">
    <property type="protein sequence ID" value="AAB98137.1"/>
    <property type="molecule type" value="Genomic_DNA"/>
</dbReference>
<dbReference type="PIR" id="D64319">
    <property type="entry name" value="D64319"/>
</dbReference>
<dbReference type="RefSeq" id="WP_010869650.1">
    <property type="nucleotide sequence ID" value="NC_000909.1"/>
</dbReference>
<dbReference type="SMR" id="Q57619"/>
<dbReference type="STRING" id="243232.MJ_0155"/>
<dbReference type="PaxDb" id="243232-MJ_0155"/>
<dbReference type="EnsemblBacteria" id="AAB98137">
    <property type="protein sequence ID" value="AAB98137"/>
    <property type="gene ID" value="MJ_0155"/>
</dbReference>
<dbReference type="GeneID" id="1450999"/>
<dbReference type="KEGG" id="mja:MJ_0155"/>
<dbReference type="eggNOG" id="arCOG01502">
    <property type="taxonomic scope" value="Archaea"/>
</dbReference>
<dbReference type="HOGENOM" id="CLU_043374_3_3_2"/>
<dbReference type="InParanoid" id="Q57619"/>
<dbReference type="OrthoDB" id="2837at2157"/>
<dbReference type="PhylomeDB" id="Q57619"/>
<dbReference type="Proteomes" id="UP000000805">
    <property type="component" value="Chromosome"/>
</dbReference>
<dbReference type="GO" id="GO:0051539">
    <property type="term" value="F:4 iron, 4 sulfur cluster binding"/>
    <property type="evidence" value="ECO:0007669"/>
    <property type="project" value="UniProtKB-KW"/>
</dbReference>
<dbReference type="GO" id="GO:0009055">
    <property type="term" value="F:electron transfer activity"/>
    <property type="evidence" value="ECO:0007669"/>
    <property type="project" value="InterPro"/>
</dbReference>
<dbReference type="GO" id="GO:0046872">
    <property type="term" value="F:metal ion binding"/>
    <property type="evidence" value="ECO:0007669"/>
    <property type="project" value="UniProtKB-KW"/>
</dbReference>
<dbReference type="GO" id="GO:0016491">
    <property type="term" value="F:oxidoreductase activity"/>
    <property type="evidence" value="ECO:0007669"/>
    <property type="project" value="UniProtKB-ARBA"/>
</dbReference>
<dbReference type="Gene3D" id="3.30.70.20">
    <property type="match status" value="2"/>
</dbReference>
<dbReference type="InterPro" id="IPR017896">
    <property type="entry name" value="4Fe4S_Fe-S-bd"/>
</dbReference>
<dbReference type="InterPro" id="IPR017900">
    <property type="entry name" value="4Fe4S_Fe_S_CS"/>
</dbReference>
<dbReference type="InterPro" id="IPR000813">
    <property type="entry name" value="7Fe_ferredoxin"/>
</dbReference>
<dbReference type="InterPro" id="IPR050294">
    <property type="entry name" value="RnfB_subfamily"/>
</dbReference>
<dbReference type="PANTHER" id="PTHR42859:SF10">
    <property type="entry name" value="DIMETHYLSULFOXIDE REDUCTASE CHAIN B"/>
    <property type="match status" value="1"/>
</dbReference>
<dbReference type="PANTHER" id="PTHR42859">
    <property type="entry name" value="OXIDOREDUCTASE"/>
    <property type="match status" value="1"/>
</dbReference>
<dbReference type="Pfam" id="PF13247">
    <property type="entry name" value="Fer4_11"/>
    <property type="match status" value="1"/>
</dbReference>
<dbReference type="PRINTS" id="PR00354">
    <property type="entry name" value="7FE8SFRDOXIN"/>
</dbReference>
<dbReference type="SUPFAM" id="SSF54862">
    <property type="entry name" value="4Fe-4S ferredoxins"/>
    <property type="match status" value="1"/>
</dbReference>
<dbReference type="PROSITE" id="PS00198">
    <property type="entry name" value="4FE4S_FER_1"/>
    <property type="match status" value="1"/>
</dbReference>
<dbReference type="PROSITE" id="PS51379">
    <property type="entry name" value="4FE4S_FER_2"/>
    <property type="match status" value="3"/>
</dbReference>
<organism>
    <name type="scientific">Methanocaldococcus jannaschii (strain ATCC 43067 / DSM 2661 / JAL-1 / JCM 10045 / NBRC 100440)</name>
    <name type="common">Methanococcus jannaschii</name>
    <dbReference type="NCBI Taxonomy" id="243232"/>
    <lineage>
        <taxon>Archaea</taxon>
        <taxon>Methanobacteriati</taxon>
        <taxon>Methanobacteriota</taxon>
        <taxon>Methanomada group</taxon>
        <taxon>Methanococci</taxon>
        <taxon>Methanococcales</taxon>
        <taxon>Methanocaldococcaceae</taxon>
        <taxon>Methanocaldococcus</taxon>
    </lineage>
</organism>